<feature type="chain" id="PRO_0000411694" description="Vacuolar membrane protease">
    <location>
        <begin position="1"/>
        <end position="962"/>
    </location>
</feature>
<feature type="topological domain" description="Cytoplasmic" evidence="1">
    <location>
        <begin position="1"/>
        <end position="15"/>
    </location>
</feature>
<feature type="transmembrane region" description="Helical; Name=1" evidence="3">
    <location>
        <begin position="16"/>
        <end position="36"/>
    </location>
</feature>
<feature type="topological domain" description="Vacuolar" evidence="1">
    <location>
        <begin position="37"/>
        <end position="390"/>
    </location>
</feature>
<feature type="transmembrane region" description="Helical; Name=2" evidence="3">
    <location>
        <begin position="391"/>
        <end position="411"/>
    </location>
</feature>
<feature type="topological domain" description="Cytoplasmic" evidence="1">
    <location>
        <begin position="412"/>
        <end position="440"/>
    </location>
</feature>
<feature type="transmembrane region" description="Helical; Name=3" evidence="3">
    <location>
        <begin position="441"/>
        <end position="461"/>
    </location>
</feature>
<feature type="topological domain" description="Vacuolar" evidence="1">
    <location>
        <begin position="462"/>
        <end position="472"/>
    </location>
</feature>
<feature type="transmembrane region" description="Helical; Name=4" evidence="3">
    <location>
        <begin position="473"/>
        <end position="493"/>
    </location>
</feature>
<feature type="topological domain" description="Cytoplasmic" evidence="1">
    <location>
        <begin position="494"/>
        <end position="503"/>
    </location>
</feature>
<feature type="transmembrane region" description="Helical; Name=5" evidence="3">
    <location>
        <begin position="504"/>
        <end position="524"/>
    </location>
</feature>
<feature type="topological domain" description="Vacuolar" evidence="1">
    <location>
        <begin position="525"/>
        <end position="534"/>
    </location>
</feature>
<feature type="transmembrane region" description="Helical; Name=6" evidence="3">
    <location>
        <begin position="535"/>
        <end position="555"/>
    </location>
</feature>
<feature type="topological domain" description="Cytoplasmic" evidence="1">
    <location>
        <begin position="556"/>
        <end position="667"/>
    </location>
</feature>
<feature type="transmembrane region" description="Helical; Name=7" evidence="3">
    <location>
        <begin position="668"/>
        <end position="688"/>
    </location>
</feature>
<feature type="topological domain" description="Vacuolar" evidence="1">
    <location>
        <begin position="689"/>
        <end position="704"/>
    </location>
</feature>
<feature type="transmembrane region" description="Helical; Name=8" evidence="3">
    <location>
        <begin position="705"/>
        <end position="725"/>
    </location>
</feature>
<feature type="topological domain" description="Cytoplasmic" evidence="1">
    <location>
        <begin position="726"/>
        <end position="731"/>
    </location>
</feature>
<feature type="transmembrane region" description="Helical; Name=9" evidence="3">
    <location>
        <begin position="732"/>
        <end position="752"/>
    </location>
</feature>
<feature type="topological domain" description="Vacuolar" evidence="1">
    <location>
        <begin position="753"/>
        <end position="962"/>
    </location>
</feature>
<feature type="region of interest" description="Disordered" evidence="5">
    <location>
        <begin position="568"/>
        <end position="617"/>
    </location>
</feature>
<feature type="compositionally biased region" description="Acidic residues" evidence="5">
    <location>
        <begin position="602"/>
        <end position="611"/>
    </location>
</feature>
<feature type="active site" description="Proton acceptor" evidence="2">
    <location>
        <position position="215"/>
    </location>
</feature>
<feature type="binding site" evidence="2">
    <location>
        <position position="169"/>
    </location>
    <ligand>
        <name>Zn(2+)</name>
        <dbReference type="ChEBI" id="CHEBI:29105"/>
        <label>1</label>
        <note>catalytic</note>
    </ligand>
</feature>
<feature type="binding site" evidence="2">
    <location>
        <position position="181"/>
    </location>
    <ligand>
        <name>Zn(2+)</name>
        <dbReference type="ChEBI" id="CHEBI:29105"/>
        <label>1</label>
        <note>catalytic</note>
    </ligand>
</feature>
<feature type="binding site" evidence="2">
    <location>
        <position position="181"/>
    </location>
    <ligand>
        <name>Zn(2+)</name>
        <dbReference type="ChEBI" id="CHEBI:29105"/>
        <label>2</label>
        <note>catalytic</note>
    </ligand>
</feature>
<feature type="binding site" evidence="2">
    <location>
        <position position="216"/>
    </location>
    <ligand>
        <name>Zn(2+)</name>
        <dbReference type="ChEBI" id="CHEBI:29105"/>
        <label>2</label>
        <note>catalytic</note>
    </ligand>
</feature>
<feature type="binding site" evidence="2">
    <location>
        <position position="241"/>
    </location>
    <ligand>
        <name>Zn(2+)</name>
        <dbReference type="ChEBI" id="CHEBI:29105"/>
        <label>1</label>
        <note>catalytic</note>
    </ligand>
</feature>
<feature type="binding site" evidence="2">
    <location>
        <position position="314"/>
    </location>
    <ligand>
        <name>Zn(2+)</name>
        <dbReference type="ChEBI" id="CHEBI:29105"/>
        <label>2</label>
        <note>catalytic</note>
    </ligand>
</feature>
<feature type="site" description="Transition state stabilizer" evidence="2">
    <location>
        <position position="313"/>
    </location>
</feature>
<feature type="glycosylation site" description="N-linked (GlcNAc...) asparagine" evidence="4">
    <location>
        <position position="110"/>
    </location>
</feature>
<feature type="glycosylation site" description="N-linked (GlcNAc...) asparagine" evidence="4">
    <location>
        <position position="113"/>
    </location>
</feature>
<feature type="glycosylation site" description="N-linked (GlcNAc...) asparagine" evidence="4">
    <location>
        <position position="834"/>
    </location>
</feature>
<gene>
    <name type="ORF">ARB_05554</name>
</gene>
<dbReference type="EC" id="3.4.-.-" evidence="6"/>
<dbReference type="EMBL" id="ABSU01000003">
    <property type="protein sequence ID" value="EFE35512.1"/>
    <property type="molecule type" value="Genomic_DNA"/>
</dbReference>
<dbReference type="RefSeq" id="XP_003016157.1">
    <property type="nucleotide sequence ID" value="XM_003016111.1"/>
</dbReference>
<dbReference type="SMR" id="D4AMV1"/>
<dbReference type="STRING" id="663331.D4AMV1"/>
<dbReference type="GeneID" id="9524146"/>
<dbReference type="KEGG" id="abe:ARB_05554"/>
<dbReference type="eggNOG" id="KOG2194">
    <property type="taxonomic scope" value="Eukaryota"/>
</dbReference>
<dbReference type="HOGENOM" id="CLU_006412_1_0_1"/>
<dbReference type="OMA" id="TPWPVTI"/>
<dbReference type="OrthoDB" id="10257471at2759"/>
<dbReference type="Proteomes" id="UP000008866">
    <property type="component" value="Unassembled WGS sequence"/>
</dbReference>
<dbReference type="GO" id="GO:0005774">
    <property type="term" value="C:vacuolar membrane"/>
    <property type="evidence" value="ECO:0007669"/>
    <property type="project" value="UniProtKB-SubCell"/>
</dbReference>
<dbReference type="GO" id="GO:0046872">
    <property type="term" value="F:metal ion binding"/>
    <property type="evidence" value="ECO:0007669"/>
    <property type="project" value="UniProtKB-KW"/>
</dbReference>
<dbReference type="GO" id="GO:0008235">
    <property type="term" value="F:metalloexopeptidase activity"/>
    <property type="evidence" value="ECO:0007669"/>
    <property type="project" value="InterPro"/>
</dbReference>
<dbReference type="GO" id="GO:0006508">
    <property type="term" value="P:proteolysis"/>
    <property type="evidence" value="ECO:0007669"/>
    <property type="project" value="UniProtKB-KW"/>
</dbReference>
<dbReference type="CDD" id="cd03875">
    <property type="entry name" value="M28_Fxna_like"/>
    <property type="match status" value="1"/>
</dbReference>
<dbReference type="FunFam" id="3.40.630.10:FF:000057">
    <property type="entry name" value="Vacuolar membrane protease"/>
    <property type="match status" value="1"/>
</dbReference>
<dbReference type="Gene3D" id="3.40.630.10">
    <property type="entry name" value="Zn peptidases"/>
    <property type="match status" value="1"/>
</dbReference>
<dbReference type="InterPro" id="IPR048024">
    <property type="entry name" value="Fxna-like_M28_dom"/>
</dbReference>
<dbReference type="InterPro" id="IPR045175">
    <property type="entry name" value="M28_fam"/>
</dbReference>
<dbReference type="InterPro" id="IPR007484">
    <property type="entry name" value="Peptidase_M28"/>
</dbReference>
<dbReference type="InterPro" id="IPR053975">
    <property type="entry name" value="PFF1_C"/>
</dbReference>
<dbReference type="InterPro" id="IPR053976">
    <property type="entry name" value="PFF1_TM"/>
</dbReference>
<dbReference type="PANTHER" id="PTHR12147">
    <property type="entry name" value="METALLOPEPTIDASE M28 FAMILY MEMBER"/>
    <property type="match status" value="1"/>
</dbReference>
<dbReference type="PANTHER" id="PTHR12147:SF58">
    <property type="entry name" value="VACUOLAR MEMBRANE PROTEASE"/>
    <property type="match status" value="1"/>
</dbReference>
<dbReference type="Pfam" id="PF04389">
    <property type="entry name" value="Peptidase_M28"/>
    <property type="match status" value="1"/>
</dbReference>
<dbReference type="Pfam" id="PF22250">
    <property type="entry name" value="PFF1_C"/>
    <property type="match status" value="1"/>
</dbReference>
<dbReference type="Pfam" id="PF22251">
    <property type="entry name" value="PFF1_TM"/>
    <property type="match status" value="1"/>
</dbReference>
<dbReference type="SUPFAM" id="SSF53187">
    <property type="entry name" value="Zn-dependent exopeptidases"/>
    <property type="match status" value="1"/>
</dbReference>
<name>PFF1_ARTBC</name>
<reference key="1">
    <citation type="journal article" date="2011" name="Genome Biol.">
        <title>Comparative and functional genomics provide insights into the pathogenicity of dermatophytic fungi.</title>
        <authorList>
            <person name="Burmester A."/>
            <person name="Shelest E."/>
            <person name="Gloeckner G."/>
            <person name="Heddergott C."/>
            <person name="Schindler S."/>
            <person name="Staib P."/>
            <person name="Heidel A."/>
            <person name="Felder M."/>
            <person name="Petzold A."/>
            <person name="Szafranski K."/>
            <person name="Feuermann M."/>
            <person name="Pedruzzi I."/>
            <person name="Priebe S."/>
            <person name="Groth M."/>
            <person name="Winkler R."/>
            <person name="Li W."/>
            <person name="Kniemeyer O."/>
            <person name="Schroeckh V."/>
            <person name="Hertweck C."/>
            <person name="Hube B."/>
            <person name="White T.C."/>
            <person name="Platzer M."/>
            <person name="Guthke R."/>
            <person name="Heitman J."/>
            <person name="Woestemeyer J."/>
            <person name="Zipfel P.F."/>
            <person name="Monod M."/>
            <person name="Brakhage A.A."/>
        </authorList>
    </citation>
    <scope>NUCLEOTIDE SEQUENCE [LARGE SCALE GENOMIC DNA]</scope>
    <source>
        <strain>ATCC MYA-4681 / CBS 112371</strain>
    </source>
</reference>
<comment type="function">
    <text evidence="1">May be involved in vacuolar sorting and osmoregulation.</text>
</comment>
<comment type="cofactor">
    <cofactor evidence="2">
        <name>Zn(2+)</name>
        <dbReference type="ChEBI" id="CHEBI:29105"/>
    </cofactor>
    <text evidence="2">Binds 2 Zn(2+) ions per subunit.</text>
</comment>
<comment type="subcellular location">
    <subcellularLocation>
        <location evidence="1">Vacuole membrane</location>
        <topology evidence="3">Multi-pass membrane protein</topology>
    </subcellularLocation>
</comment>
<comment type="similarity">
    <text evidence="6">Belongs to the peptidase M28 family.</text>
</comment>
<protein>
    <recommendedName>
        <fullName evidence="1">Vacuolar membrane protease</fullName>
        <ecNumber evidence="6">3.4.-.-</ecNumber>
    </recommendedName>
    <alternativeName>
        <fullName evidence="1">FXNA-related family protease 1</fullName>
    </alternativeName>
</protein>
<evidence type="ECO:0000250" key="1">
    <source>
        <dbReference type="UniProtKB" id="P38244"/>
    </source>
</evidence>
<evidence type="ECO:0000250" key="2">
    <source>
        <dbReference type="UniProtKB" id="P80561"/>
    </source>
</evidence>
<evidence type="ECO:0000255" key="3"/>
<evidence type="ECO:0000255" key="4">
    <source>
        <dbReference type="PROSITE-ProRule" id="PRU00498"/>
    </source>
</evidence>
<evidence type="ECO:0000256" key="5">
    <source>
        <dbReference type="SAM" id="MobiDB-lite"/>
    </source>
</evidence>
<evidence type="ECO:0000305" key="6"/>
<organism>
    <name type="scientific">Arthroderma benhamiae (strain ATCC MYA-4681 / CBS 112371)</name>
    <name type="common">Trichophyton mentagrophytes</name>
    <dbReference type="NCBI Taxonomy" id="663331"/>
    <lineage>
        <taxon>Eukaryota</taxon>
        <taxon>Fungi</taxon>
        <taxon>Dikarya</taxon>
        <taxon>Ascomycota</taxon>
        <taxon>Pezizomycotina</taxon>
        <taxon>Eurotiomycetes</taxon>
        <taxon>Eurotiomycetidae</taxon>
        <taxon>Onygenales</taxon>
        <taxon>Arthrodermataceae</taxon>
        <taxon>Trichophyton</taxon>
    </lineage>
</organism>
<sequence>MVSSRRGFNPIAFTPWPVTILSSLVYLALIIPIIVVHHLVPPAPKESPAGVDLEEAWHDLQHLTRQYHPYNSHSNDEVHQWLLKRIHAISATSARSESQSGPEVFVFDDNQTNLTFSSAGVAATAITGVYFESRNIVVYIRGTEDEPGEWWKSPDGEPSGKGGVLVNAHYDSVSTGYGATDNGVGVITTLQLLKYFTTPGHYPRKGLVLLFNNGEEDFLNGAYAYSQHPMSKFTHTFLNLEGAGAGGRAVLFRSTDTEVTRFYGKSEHPFGTVLARDAFKLKFIRSETDYHVFDGVFGMRGLDVAFMEPRSRYHTDQDDARHTSIDSVWHMLSAAITTTEGLVSYTGDAFDGDSGDGGKLNNGIGTLGVWFDFFGSSFAVFQLNTLFGHSVALLVVAPLLLIITSVALFAVDKMYMFSMYTYISESGGQVSLYGLRGMFRFPLILGISTALTIALAFLIMKVNPFIIYSSPYAVWSMMLSTCMFFAWFISCVADFARPSALHRAYSFSWMFGIMWVFLVIATVYQKQHGIASSYFIVFYFAGVAVATWISYLELFGLPKTQDYARRQGRLSDRTPSSDSHFLAPSADELPSSSSAAGRDFNPEDVEDEEPTESTSLLRGQQRTTFANYASARGSQESNISNQGNNSLHPKDHRLEQKWSIYLMSSAWILQFLLVAPIVIILLGQLGLFLTSATYQIGADGGSQLVIYIGIAVLSVLILLPLFPFIHRFTYHIPTFLLFILIGTLVYNLTAFPFSHSNRLKLAFVQEMDLATGNNQASLVGVEPYIHDAVHAIPSVQDGKISCTSHGYGGRTKCSWPGLKPKVAEGPYKDWVSYNISKTKDDKITRFEVSGKNTRACKLLFDSPIADFHVQGSVVDKRLPHTGPKGVSEIRLWSRNWENTWTVDVEWTKKNSERTGKVMCLWSDDNDLHVIPELDLARKFAPWWVAITKLRDGLVEGSYSFKL</sequence>
<keyword id="KW-0325">Glycoprotein</keyword>
<keyword id="KW-0378">Hydrolase</keyword>
<keyword id="KW-0472">Membrane</keyword>
<keyword id="KW-0479">Metal-binding</keyword>
<keyword id="KW-0482">Metalloprotease</keyword>
<keyword id="KW-0645">Protease</keyword>
<keyword id="KW-1185">Reference proteome</keyword>
<keyword id="KW-0812">Transmembrane</keyword>
<keyword id="KW-1133">Transmembrane helix</keyword>
<keyword id="KW-0926">Vacuole</keyword>
<keyword id="KW-0862">Zinc</keyword>
<accession>D4AMV1</accession>
<proteinExistence type="inferred from homology"/>